<keyword id="KW-1185">Reference proteome</keyword>
<keyword id="KW-0732">Signal</keyword>
<protein>
    <recommendedName>
        <fullName>Uncharacterized protein Os02g0798501</fullName>
    </recommendedName>
    <alternativeName>
        <fullName>Unknown protein AN04</fullName>
    </alternativeName>
</protein>
<reference key="1">
    <citation type="journal article" date="2005" name="Nature">
        <title>The map-based sequence of the rice genome.</title>
        <authorList>
            <consortium name="International rice genome sequencing project (IRGSP)"/>
        </authorList>
    </citation>
    <scope>NUCLEOTIDE SEQUENCE [LARGE SCALE GENOMIC DNA]</scope>
    <source>
        <strain>cv. Nipponbare</strain>
    </source>
</reference>
<reference key="2">
    <citation type="journal article" date="2008" name="Nucleic Acids Res.">
        <title>The rice annotation project database (RAP-DB): 2008 update.</title>
        <authorList>
            <consortium name="The rice annotation project (RAP)"/>
        </authorList>
    </citation>
    <scope>GENOME REANNOTATION</scope>
    <source>
        <strain>cv. Nipponbare</strain>
    </source>
</reference>
<reference key="3">
    <citation type="journal article" date="2013" name="Rice">
        <title>Improvement of the Oryza sativa Nipponbare reference genome using next generation sequence and optical map data.</title>
        <authorList>
            <person name="Kawahara Y."/>
            <person name="de la Bastide M."/>
            <person name="Hamilton J.P."/>
            <person name="Kanamori H."/>
            <person name="McCombie W.R."/>
            <person name="Ouyang S."/>
            <person name="Schwartz D.C."/>
            <person name="Tanaka T."/>
            <person name="Wu J."/>
            <person name="Zhou S."/>
            <person name="Childs K.L."/>
            <person name="Davidson R.M."/>
            <person name="Lin H."/>
            <person name="Quesada-Ocampo L."/>
            <person name="Vaillancourt B."/>
            <person name="Sakai H."/>
            <person name="Lee S.S."/>
            <person name="Kim J."/>
            <person name="Numa H."/>
            <person name="Itoh T."/>
            <person name="Buell C.R."/>
            <person name="Matsumoto T."/>
        </authorList>
    </citation>
    <scope>GENOME REANNOTATION</scope>
    <source>
        <strain>cv. Nipponbare</strain>
    </source>
</reference>
<proteinExistence type="inferred from homology"/>
<evidence type="ECO:0000255" key="1"/>
<evidence type="ECO:0000305" key="2"/>
<evidence type="ECO:0000312" key="3">
    <source>
        <dbReference type="EMBL" id="BAS81385.1"/>
    </source>
</evidence>
<feature type="signal peptide" evidence="1">
    <location>
        <begin position="1"/>
        <end position="21"/>
    </location>
</feature>
<feature type="chain" id="PRO_0000392532" description="Uncharacterized protein Os02g0798501">
    <location>
        <begin position="22"/>
        <end position="129"/>
    </location>
</feature>
<sequence length="129" mass="14316">MAQNKTIAVALLLATLVAVMGKEPETLEEAVRAGCKEECSEQKKKAPIDEKQCEDFCFIKTKSIFEAHKGVKDLKADRFIDFCNNECNAVYKEDPATSKKCAESCEADAKEAEVFLDKVVAYIQTTKQA</sequence>
<organism>
    <name type="scientific">Oryza sativa subsp. japonica</name>
    <name type="common">Rice</name>
    <dbReference type="NCBI Taxonomy" id="39947"/>
    <lineage>
        <taxon>Eukaryota</taxon>
        <taxon>Viridiplantae</taxon>
        <taxon>Streptophyta</taxon>
        <taxon>Embryophyta</taxon>
        <taxon>Tracheophyta</taxon>
        <taxon>Spermatophyta</taxon>
        <taxon>Magnoliopsida</taxon>
        <taxon>Liliopsida</taxon>
        <taxon>Poales</taxon>
        <taxon>Poaceae</taxon>
        <taxon>BOP clade</taxon>
        <taxon>Oryzoideae</taxon>
        <taxon>Oryzeae</taxon>
        <taxon>Oryzinae</taxon>
        <taxon>Oryza</taxon>
        <taxon>Oryza sativa</taxon>
    </lineage>
</organism>
<gene>
    <name evidence="3" type="ordered locus">Os02g0798501</name>
    <name evidence="2" type="ordered locus">LOC_Os02g55510</name>
    <name type="ORF">OJ1695_D07.8</name>
</gene>
<accession>B7F6L8</accession>
<accession>A0A0N7KG94</accession>
<accession>Q69QZ5</accession>
<dbReference type="EMBL" id="AP005296">
    <property type="protein sequence ID" value="BAD36055.1"/>
    <property type="molecule type" value="Genomic_DNA"/>
</dbReference>
<dbReference type="EMBL" id="AP008208">
    <property type="protein sequence ID" value="BAH91910.1"/>
    <property type="molecule type" value="Genomic_DNA"/>
</dbReference>
<dbReference type="EMBL" id="AP014958">
    <property type="protein sequence ID" value="BAS81385.1"/>
    <property type="molecule type" value="Genomic_DNA"/>
</dbReference>
<dbReference type="RefSeq" id="XP_015625704.1">
    <property type="nucleotide sequence ID" value="XM_015770218.1"/>
</dbReference>
<dbReference type="RefSeq" id="XP_015625705.1">
    <property type="nucleotide sequence ID" value="XM_015770219.1"/>
</dbReference>
<dbReference type="SMR" id="B7F6L8"/>
<dbReference type="PaxDb" id="39947-B7F6L8"/>
<dbReference type="EnsemblPlants" id="Os02t0798400-01">
    <property type="protein sequence ID" value="Os02t0798400-01"/>
    <property type="gene ID" value="Os02g0798400"/>
</dbReference>
<dbReference type="EnsemblPlants" id="Os02t0798501-00">
    <property type="protein sequence ID" value="Os02t0798501-00"/>
    <property type="gene ID" value="Os02g0798501"/>
</dbReference>
<dbReference type="Gramene" id="Os02t0798400-01">
    <property type="protein sequence ID" value="Os02t0798400-01"/>
    <property type="gene ID" value="Os02g0798400"/>
</dbReference>
<dbReference type="Gramene" id="Os02t0798501-00">
    <property type="protein sequence ID" value="Os02t0798501-00"/>
    <property type="gene ID" value="Os02g0798501"/>
</dbReference>
<dbReference type="KEGG" id="dosa:Os02g0798450"/>
<dbReference type="HOGENOM" id="CLU_160271_0_0_1"/>
<dbReference type="InParanoid" id="B7F6L8"/>
<dbReference type="OrthoDB" id="699334at2759"/>
<dbReference type="Proteomes" id="UP000000763">
    <property type="component" value="Chromosome 2"/>
</dbReference>
<dbReference type="Proteomes" id="UP000000763">
    <property type="component" value="Chromosome 7"/>
</dbReference>
<dbReference type="Proteomes" id="UP000059680">
    <property type="component" value="Chromosome 2"/>
</dbReference>
<dbReference type="ExpressionAtlas" id="B7F6L8">
    <property type="expression patterns" value="baseline and differential"/>
</dbReference>
<name>Y2985_ORYSJ</name>